<dbReference type="EMBL" id="CP000116">
    <property type="protein sequence ID" value="AAZ96338.1"/>
    <property type="molecule type" value="Genomic_DNA"/>
</dbReference>
<dbReference type="SMR" id="Q3SLR7"/>
<dbReference type="STRING" id="292415.Tbd_0385"/>
<dbReference type="KEGG" id="tbd:Tbd_0385"/>
<dbReference type="eggNOG" id="COG3017">
    <property type="taxonomic scope" value="Bacteria"/>
</dbReference>
<dbReference type="HOGENOM" id="CLU_092816_3_1_4"/>
<dbReference type="OrthoDB" id="9797618at2"/>
<dbReference type="Proteomes" id="UP000008291">
    <property type="component" value="Chromosome"/>
</dbReference>
<dbReference type="GO" id="GO:0009279">
    <property type="term" value="C:cell outer membrane"/>
    <property type="evidence" value="ECO:0007669"/>
    <property type="project" value="UniProtKB-SubCell"/>
</dbReference>
<dbReference type="GO" id="GO:0044874">
    <property type="term" value="P:lipoprotein localization to outer membrane"/>
    <property type="evidence" value="ECO:0007669"/>
    <property type="project" value="UniProtKB-UniRule"/>
</dbReference>
<dbReference type="GO" id="GO:0015031">
    <property type="term" value="P:protein transport"/>
    <property type="evidence" value="ECO:0007669"/>
    <property type="project" value="UniProtKB-KW"/>
</dbReference>
<dbReference type="CDD" id="cd16326">
    <property type="entry name" value="LolB"/>
    <property type="match status" value="1"/>
</dbReference>
<dbReference type="Gene3D" id="2.50.20.10">
    <property type="entry name" value="Lipoprotein localisation LolA/LolB/LppX"/>
    <property type="match status" value="1"/>
</dbReference>
<dbReference type="HAMAP" id="MF_00233">
    <property type="entry name" value="LolB"/>
    <property type="match status" value="1"/>
</dbReference>
<dbReference type="InterPro" id="IPR029046">
    <property type="entry name" value="LolA/LolB/LppX"/>
</dbReference>
<dbReference type="InterPro" id="IPR004565">
    <property type="entry name" value="OM_lipoprot_LolB"/>
</dbReference>
<dbReference type="NCBIfam" id="TIGR00548">
    <property type="entry name" value="lolB"/>
    <property type="match status" value="1"/>
</dbReference>
<dbReference type="Pfam" id="PF03550">
    <property type="entry name" value="LolB"/>
    <property type="match status" value="1"/>
</dbReference>
<dbReference type="SUPFAM" id="SSF89392">
    <property type="entry name" value="Prokaryotic lipoproteins and lipoprotein localization factors"/>
    <property type="match status" value="1"/>
</dbReference>
<dbReference type="PROSITE" id="PS51257">
    <property type="entry name" value="PROKAR_LIPOPROTEIN"/>
    <property type="match status" value="1"/>
</dbReference>
<reference key="1">
    <citation type="journal article" date="2006" name="J. Bacteriol.">
        <title>The genome sequence of the obligately chemolithoautotrophic, facultatively anaerobic bacterium Thiobacillus denitrificans.</title>
        <authorList>
            <person name="Beller H.R."/>
            <person name="Chain P.S."/>
            <person name="Letain T.E."/>
            <person name="Chakicherla A."/>
            <person name="Larimer F.W."/>
            <person name="Richardson P.M."/>
            <person name="Coleman M.A."/>
            <person name="Wood A.P."/>
            <person name="Kelly D.P."/>
        </authorList>
    </citation>
    <scope>NUCLEOTIDE SEQUENCE [LARGE SCALE GENOMIC DNA]</scope>
    <source>
        <strain>ATCC 25259 / T1</strain>
    </source>
</reference>
<evidence type="ECO:0000255" key="1">
    <source>
        <dbReference type="HAMAP-Rule" id="MF_00233"/>
    </source>
</evidence>
<feature type="signal peptide" evidence="1">
    <location>
        <begin position="1"/>
        <end position="16"/>
    </location>
</feature>
<feature type="chain" id="PRO_0000336619" description="Outer-membrane lipoprotein LolB">
    <location>
        <begin position="17"/>
        <end position="186"/>
    </location>
</feature>
<feature type="lipid moiety-binding region" description="N-palmitoyl cysteine" evidence="1">
    <location>
        <position position="17"/>
    </location>
</feature>
<feature type="lipid moiety-binding region" description="S-diacylglycerol cysteine" evidence="1">
    <location>
        <position position="17"/>
    </location>
</feature>
<protein>
    <recommendedName>
        <fullName evidence="1">Outer-membrane lipoprotein LolB</fullName>
    </recommendedName>
</protein>
<comment type="function">
    <text evidence="1">Plays a critical role in the incorporation of lipoproteins in the outer membrane after they are released by the LolA protein.</text>
</comment>
<comment type="subunit">
    <text evidence="1">Monomer.</text>
</comment>
<comment type="subcellular location">
    <subcellularLocation>
        <location evidence="1">Cell outer membrane</location>
        <topology evidence="1">Lipid-anchor</topology>
    </subcellularLocation>
</comment>
<comment type="similarity">
    <text evidence="1">Belongs to the LolB family.</text>
</comment>
<name>LOLB_THIDA</name>
<keyword id="KW-0998">Cell outer membrane</keyword>
<keyword id="KW-0143">Chaperone</keyword>
<keyword id="KW-0449">Lipoprotein</keyword>
<keyword id="KW-0472">Membrane</keyword>
<keyword id="KW-0564">Palmitate</keyword>
<keyword id="KW-0653">Protein transport</keyword>
<keyword id="KW-1185">Reference proteome</keyword>
<keyword id="KW-0732">Signal</keyword>
<keyword id="KW-0813">Transport</keyword>
<sequence length="186" mass="19963">MRRLAVIASLAWALGGCATVAPPPQAAIPVPLADAWTLQGRLGVQTERESLSGQIRWQHGGGVDQVLLTSPLGQGVARIVRDPEGVSLELPGQPVRRATDVDTLTRDALGYELPVAGLAWWIQARPDPLREAAVALGDDGRPARIVQDGWTIDYLQYGADARPRKLVVSRAGLEIRLVADSWQSAP</sequence>
<accession>Q3SLR7</accession>
<organism>
    <name type="scientific">Thiobacillus denitrificans (strain ATCC 25259 / T1)</name>
    <dbReference type="NCBI Taxonomy" id="292415"/>
    <lineage>
        <taxon>Bacteria</taxon>
        <taxon>Pseudomonadati</taxon>
        <taxon>Pseudomonadota</taxon>
        <taxon>Betaproteobacteria</taxon>
        <taxon>Nitrosomonadales</taxon>
        <taxon>Thiobacillaceae</taxon>
        <taxon>Thiobacillus</taxon>
    </lineage>
</organism>
<gene>
    <name evidence="1" type="primary">lolB</name>
    <name type="ordered locus">Tbd_0385</name>
</gene>
<proteinExistence type="inferred from homology"/>